<accession>Q5CZP2</accession>
<accession>A0A2R8QAT5</accession>
<comment type="function">
    <text evidence="3 4 6 7 8 9">Heat-shock transcription factor that specifically binds heat shock promoter elements (HSE) (PubMed:22528049). Required for denucleation and organelle rupture and degradation that occur during eye lens terminal differentiation, when fiber cells that compose the lens degrade all membrane-bound organelles in order to provide lens with transparency to allow the passage of light (PubMed:32061775, PubMed:33854238). In this process, may regulate denucleation of lens fiber cells in part by activating dnase1l1l and dnase2b transcription (PubMed:32061775). May be involved in DNA repair through the transcriptional regulation of rad51 (PubMed:22587838). May up-regulate TP53 protein in lens fiber cells, possibly through protein stabilization (PubMed:28981088). In the eye lens, controls the expression of alpha-crystallin B chain/CRYAB and consequently may be involved in the regulation of lysosomal acidification (PubMed:31786107).</text>
</comment>
<comment type="subcellular location">
    <subcellularLocation>
        <location evidence="2">Nucleus</location>
    </subcellularLocation>
</comment>
<comment type="alternative products">
    <event type="alternative splicing"/>
    <isoform>
        <id>Q5CZP2-1</id>
        <name>1</name>
        <sequence type="displayed"/>
    </isoform>
    <isoform>
        <id>Q5CZP2-2</id>
        <name>2</name>
        <sequence type="described" ref="VSP_061246"/>
    </isoform>
</comment>
<comment type="tissue specificity">
    <text evidence="3 6">Predominantly expressed in the eye.</text>
</comment>
<comment type="developmental stage">
    <text evidence="5">Expression in the ocular lens starts at as early as 24 hours post fertilization (hpf).</text>
</comment>
<comment type="disruption phenotype">
    <text evidence="4 5 6 9">In knockout animals, the eye lens grows normally, but during lens differentiation, denucleation is impaired and the degradation of mitochondria and endoplasmic reticulum is suppressed.</text>
</comment>
<comment type="similarity">
    <text evidence="10">Belongs to the HSF family.</text>
</comment>
<feature type="chain" id="PRO_0000454112" description="Heat shock factor protein 4">
    <location>
        <begin position="1"/>
        <end position="441"/>
    </location>
</feature>
<feature type="DNA-binding region" evidence="1">
    <location>
        <begin position="17"/>
        <end position="121"/>
    </location>
</feature>
<feature type="region of interest" description="Hydrophobic repeat HR-A/B" evidence="2">
    <location>
        <begin position="130"/>
        <end position="205"/>
    </location>
</feature>
<feature type="splice variant" id="VSP_061246" description="In isoform 2.">
    <location>
        <begin position="287"/>
        <end position="441"/>
    </location>
</feature>
<proteinExistence type="evidence at transcript level"/>
<sequence length="441" mass="49773">MQENPGSIGVDGGYASNVPAFLTKLWTLVEDPETNHLICWSATGTSFHVFDQGRFAKEVLPKYFKHNNMASFVRQLNMYGFRKVVNIEQSGLVKPERDDTEFQHLYFLQGHEHLLEHIKRKVSIVKSEETKVRQEDLSKLLYEVQVLRSQQENMEMQMQDMKQQNDVLWREVVSLRQNHTQQQKVMNKLIQFLFSQMQSNSPSTVGMKRKLPLMLDDGCSTPPASKFSHNHSMESLQESFYIQSPSTESASCSTSSVMTGGPIISDVTEIPQSSSMALQMQAEESREKCLMLIKEEPVSPGVQGRAEGVPLGSCEVCAEPPVLPVAMVQSVLEGRGSNLGERRAKRPMLERPEIPDGVENVDMSLEDLQLLLRSHQQSMENNAAAMDQFTFSLPLNEWNFAEMDPNLKSELANALIPAAVSQYMFQGQEGELYPTAGYEEQ</sequence>
<gene>
    <name evidence="12" type="primary">hsf4</name>
    <name evidence="11 12" type="ORF">zgc:113344</name>
</gene>
<organism>
    <name type="scientific">Danio rerio</name>
    <name type="common">Zebrafish</name>
    <name type="synonym">Brachydanio rerio</name>
    <dbReference type="NCBI Taxonomy" id="7955"/>
    <lineage>
        <taxon>Eukaryota</taxon>
        <taxon>Metazoa</taxon>
        <taxon>Chordata</taxon>
        <taxon>Craniata</taxon>
        <taxon>Vertebrata</taxon>
        <taxon>Euteleostomi</taxon>
        <taxon>Actinopterygii</taxon>
        <taxon>Neopterygii</taxon>
        <taxon>Teleostei</taxon>
        <taxon>Ostariophysi</taxon>
        <taxon>Cypriniformes</taxon>
        <taxon>Danionidae</taxon>
        <taxon>Danioninae</taxon>
        <taxon>Danio</taxon>
    </lineage>
</organism>
<keyword id="KW-0010">Activator</keyword>
<keyword id="KW-0025">Alternative splicing</keyword>
<keyword id="KW-0238">DNA-binding</keyword>
<keyword id="KW-0539">Nucleus</keyword>
<keyword id="KW-1185">Reference proteome</keyword>
<keyword id="KW-0346">Stress response</keyword>
<keyword id="KW-0804">Transcription</keyword>
<keyword id="KW-0805">Transcription regulation</keyword>
<protein>
    <recommendedName>
        <fullName>Heat shock factor protein 4</fullName>
    </recommendedName>
</protein>
<name>HSF4_DANRE</name>
<reference key="1">
    <citation type="journal article" date="2013" name="Nature">
        <title>The zebrafish reference genome sequence and its relationship to the human genome.</title>
        <authorList>
            <person name="Howe K."/>
            <person name="Clark M.D."/>
            <person name="Torroja C.F."/>
            <person name="Torrance J."/>
            <person name="Berthelot C."/>
            <person name="Muffato M."/>
            <person name="Collins J.E."/>
            <person name="Humphray S."/>
            <person name="McLaren K."/>
            <person name="Matthews L."/>
            <person name="McLaren S."/>
            <person name="Sealy I."/>
            <person name="Caccamo M."/>
            <person name="Churcher C."/>
            <person name="Scott C."/>
            <person name="Barrett J.C."/>
            <person name="Koch R."/>
            <person name="Rauch G.J."/>
            <person name="White S."/>
            <person name="Chow W."/>
            <person name="Kilian B."/>
            <person name="Quintais L.T."/>
            <person name="Guerra-Assuncao J.A."/>
            <person name="Zhou Y."/>
            <person name="Gu Y."/>
            <person name="Yen J."/>
            <person name="Vogel J.H."/>
            <person name="Eyre T."/>
            <person name="Redmond S."/>
            <person name="Banerjee R."/>
            <person name="Chi J."/>
            <person name="Fu B."/>
            <person name="Langley E."/>
            <person name="Maguire S.F."/>
            <person name="Laird G.K."/>
            <person name="Lloyd D."/>
            <person name="Kenyon E."/>
            <person name="Donaldson S."/>
            <person name="Sehra H."/>
            <person name="Almeida-King J."/>
            <person name="Loveland J."/>
            <person name="Trevanion S."/>
            <person name="Jones M."/>
            <person name="Quail M."/>
            <person name="Willey D."/>
            <person name="Hunt A."/>
            <person name="Burton J."/>
            <person name="Sims S."/>
            <person name="McLay K."/>
            <person name="Plumb B."/>
            <person name="Davis J."/>
            <person name="Clee C."/>
            <person name="Oliver K."/>
            <person name="Clark R."/>
            <person name="Riddle C."/>
            <person name="Elliot D."/>
            <person name="Threadgold G."/>
            <person name="Harden G."/>
            <person name="Ware D."/>
            <person name="Begum S."/>
            <person name="Mortimore B."/>
            <person name="Kerry G."/>
            <person name="Heath P."/>
            <person name="Phillimore B."/>
            <person name="Tracey A."/>
            <person name="Corby N."/>
            <person name="Dunn M."/>
            <person name="Johnson C."/>
            <person name="Wood J."/>
            <person name="Clark S."/>
            <person name="Pelan S."/>
            <person name="Griffiths G."/>
            <person name="Smith M."/>
            <person name="Glithero R."/>
            <person name="Howden P."/>
            <person name="Barker N."/>
            <person name="Lloyd C."/>
            <person name="Stevens C."/>
            <person name="Harley J."/>
            <person name="Holt K."/>
            <person name="Panagiotidis G."/>
            <person name="Lovell J."/>
            <person name="Beasley H."/>
            <person name="Henderson C."/>
            <person name="Gordon D."/>
            <person name="Auger K."/>
            <person name="Wright D."/>
            <person name="Collins J."/>
            <person name="Raisen C."/>
            <person name="Dyer L."/>
            <person name="Leung K."/>
            <person name="Robertson L."/>
            <person name="Ambridge K."/>
            <person name="Leongamornlert D."/>
            <person name="McGuire S."/>
            <person name="Gilderthorp R."/>
            <person name="Griffiths C."/>
            <person name="Manthravadi D."/>
            <person name="Nichol S."/>
            <person name="Barker G."/>
            <person name="Whitehead S."/>
            <person name="Kay M."/>
            <person name="Brown J."/>
            <person name="Murnane C."/>
            <person name="Gray E."/>
            <person name="Humphries M."/>
            <person name="Sycamore N."/>
            <person name="Barker D."/>
            <person name="Saunders D."/>
            <person name="Wallis J."/>
            <person name="Babbage A."/>
            <person name="Hammond S."/>
            <person name="Mashreghi-Mohammadi M."/>
            <person name="Barr L."/>
            <person name="Martin S."/>
            <person name="Wray P."/>
            <person name="Ellington A."/>
            <person name="Matthews N."/>
            <person name="Ellwood M."/>
            <person name="Woodmansey R."/>
            <person name="Clark G."/>
            <person name="Cooper J."/>
            <person name="Tromans A."/>
            <person name="Grafham D."/>
            <person name="Skuce C."/>
            <person name="Pandian R."/>
            <person name="Andrews R."/>
            <person name="Harrison E."/>
            <person name="Kimberley A."/>
            <person name="Garnett J."/>
            <person name="Fosker N."/>
            <person name="Hall R."/>
            <person name="Garner P."/>
            <person name="Kelly D."/>
            <person name="Bird C."/>
            <person name="Palmer S."/>
            <person name="Gehring I."/>
            <person name="Berger A."/>
            <person name="Dooley C.M."/>
            <person name="Ersan-Urun Z."/>
            <person name="Eser C."/>
            <person name="Geiger H."/>
            <person name="Geisler M."/>
            <person name="Karotki L."/>
            <person name="Kirn A."/>
            <person name="Konantz J."/>
            <person name="Konantz M."/>
            <person name="Oberlander M."/>
            <person name="Rudolph-Geiger S."/>
            <person name="Teucke M."/>
            <person name="Lanz C."/>
            <person name="Raddatz G."/>
            <person name="Osoegawa K."/>
            <person name="Zhu B."/>
            <person name="Rapp A."/>
            <person name="Widaa S."/>
            <person name="Langford C."/>
            <person name="Yang F."/>
            <person name="Schuster S.C."/>
            <person name="Carter N.P."/>
            <person name="Harrow J."/>
            <person name="Ning Z."/>
            <person name="Herrero J."/>
            <person name="Searle S.M."/>
            <person name="Enright A."/>
            <person name="Geisler R."/>
            <person name="Plasterk R.H."/>
            <person name="Lee C."/>
            <person name="Westerfield M."/>
            <person name="de Jong P.J."/>
            <person name="Zon L.I."/>
            <person name="Postlethwait J.H."/>
            <person name="Nusslein-Volhard C."/>
            <person name="Hubbard T.J."/>
            <person name="Roest Crollius H."/>
            <person name="Rogers J."/>
            <person name="Stemple D.L."/>
        </authorList>
    </citation>
    <scope>NUCLEOTIDE SEQUENCE [LARGE SCALE GENOMIC DNA]</scope>
    <source>
        <strain>Tuebingen</strain>
    </source>
</reference>
<reference key="2">
    <citation type="submission" date="2005-02" db="EMBL/GenBank/DDBJ databases">
        <authorList>
            <consortium name="NIH - Zebrafish Gene Collection (ZGC) project"/>
        </authorList>
    </citation>
    <scope>NUCLEOTIDE SEQUENCE [LARGE SCALE MRNA] (ISOFORM 2)</scope>
    <source>
        <tissue>Embryo</tissue>
    </source>
</reference>
<reference key="3">
    <citation type="journal article" date="2012" name="Biochim. Biophys. Acta">
        <title>HSF4 is involved in DNA damage repair through regulation of Rad51.</title>
        <authorList>
            <person name="Cui X."/>
            <person name="Zhang J."/>
            <person name="Du R."/>
            <person name="Wang L."/>
            <person name="Archacki S."/>
            <person name="Zhang Y."/>
            <person name="Yuan M."/>
            <person name="Ke T."/>
            <person name="Li H."/>
            <person name="Li D."/>
            <person name="Li C."/>
            <person name="Li D.W."/>
            <person name="Tang Z."/>
            <person name="Yin Z."/>
            <person name="Liu M."/>
        </authorList>
    </citation>
    <scope>FUNCTION</scope>
    <scope>DISRUPTION PHENOTYPE</scope>
</reference>
<reference key="4">
    <citation type="journal article" date="2012" name="Cell Stress Chaperones">
        <title>Zebrafish HSF4: a novel protein that shares features of both HSF1 and HSF4 of mammals.</title>
        <authorList>
            <person name="Swan C.L."/>
            <person name="Evans T.G."/>
            <person name="Sylvain N."/>
            <person name="Krone P.H."/>
        </authorList>
    </citation>
    <scope>FUNCTION</scope>
    <scope>TISSUE SPECIFICITY</scope>
</reference>
<reference key="5">
    <citation type="journal article" date="2013" name="Biochim. Biophys. Acta">
        <title>HSF4 regulates DLAD expression and promotes lens de-nucleation.</title>
        <authorList>
            <person name="Cui X."/>
            <person name="Wang L."/>
            <person name="Zhang J."/>
            <person name="Du R."/>
            <person name="Liao S."/>
            <person name="Li D."/>
            <person name="Li C."/>
            <person name="Ke T."/>
            <person name="Li D.W."/>
            <person name="Huang H."/>
            <person name="Yin Z."/>
            <person name="Tang Z."/>
            <person name="Liu M."/>
        </authorList>
    </citation>
    <scope>FUNCTION</scope>
    <scope>DISRUPTION PHENOTYPE</scope>
    <scope>DEVELOPMENTAL STAGE</scope>
</reference>
<reference key="6">
    <citation type="journal article" date="2017" name="Cell Death Dis.">
        <title>HSF4 regulates lens fiber cell differentiation by activating p53 and its downstream regulators.</title>
        <authorList>
            <person name="Gao M."/>
            <person name="Huang Y."/>
            <person name="Wang L."/>
            <person name="Huang M."/>
            <person name="Liu F."/>
            <person name="Liao S."/>
            <person name="Yu S."/>
            <person name="Lu Z."/>
            <person name="Han S."/>
            <person name="Hu X."/>
            <person name="Qu Z."/>
            <person name="Liu X."/>
            <person name="Assefa Yimer T."/>
            <person name="Yang L."/>
            <person name="Tang Z."/>
            <person name="Li D.W."/>
            <person name="Liu M."/>
        </authorList>
    </citation>
    <scope>FUNCTION</scope>
    <scope>TISSUE SPECIFICITY</scope>
    <scope>DISRUPTION PHENOTYPE</scope>
</reference>
<reference key="7">
    <citation type="journal article" date="2020" name="Biochim. Biophys. Acta">
        <title>Knockout of DNase1l1l abrogates lens denucleation process and causes cataract in zebrafish.</title>
        <authorList>
            <person name="Zhang J."/>
            <person name="Cui W.W."/>
            <person name="Du C."/>
            <person name="Huang Y."/>
            <person name="Pi X."/>
            <person name="Guo W."/>
            <person name="Wang J."/>
            <person name="Huang W."/>
            <person name="Chen D."/>
            <person name="Li J."/>
            <person name="Li H."/>
            <person name="Zhang J."/>
            <person name="Ma Y."/>
            <person name="Mu H."/>
            <person name="Zhang S."/>
            <person name="Liu M."/>
            <person name="Cui X."/>
            <person name="Hu Y."/>
        </authorList>
    </citation>
    <scope>FUNCTION</scope>
</reference>
<reference key="8">
    <citation type="journal article" date="2020" name="Biochim. Biophys. Acta">
        <title>Heat shock factor 4 regulates lysosome activity by modulating the alphaB-crystallin-ATP6V1A-mTOR complex in ocular lens.</title>
        <authorList>
            <person name="Cui X."/>
            <person name="Feng R."/>
            <person name="Wang J."/>
            <person name="Du C."/>
            <person name="Pi X."/>
            <person name="Chen D."/>
            <person name="Li J."/>
            <person name="Li H."/>
            <person name="Zhang J."/>
            <person name="Zhang J."/>
            <person name="Mu H."/>
            <person name="Zhang F."/>
            <person name="Liu M."/>
            <person name="Hu Y."/>
        </authorList>
    </citation>
    <scope>FUNCTION</scope>
</reference>
<reference key="9">
    <citation type="journal article" date="2021" name="Nature">
        <title>Organelle degradation in the lens by PLAAT phospholipases.</title>
        <authorList>
            <person name="Morishita H."/>
            <person name="Eguchi T."/>
            <person name="Tsukamoto S."/>
            <person name="Sakamaki Y."/>
            <person name="Takahashi S."/>
            <person name="Saito C."/>
            <person name="Koyama-Honda I."/>
            <person name="Mizushima N."/>
        </authorList>
    </citation>
    <scope>FUNCTION</scope>
    <scope>DISRUPTION PHENOTYPE</scope>
</reference>
<dbReference type="EMBL" id="BX088710">
    <property type="status" value="NOT_ANNOTATED_CDS"/>
    <property type="molecule type" value="Genomic_DNA"/>
</dbReference>
<dbReference type="EMBL" id="BC090769">
    <property type="protein sequence ID" value="AAH90769.1"/>
    <property type="molecule type" value="mRNA"/>
</dbReference>
<dbReference type="EMBL" id="BC165271">
    <property type="protein sequence ID" value="AAI65271.1"/>
    <property type="molecule type" value="mRNA"/>
</dbReference>
<dbReference type="RefSeq" id="NP_001315137.1">
    <molecule id="Q5CZP2-1"/>
    <property type="nucleotide sequence ID" value="NM_001328208.1"/>
</dbReference>
<dbReference type="RefSeq" id="XP_021323315.1">
    <molecule id="Q5CZP2-1"/>
    <property type="nucleotide sequence ID" value="XM_021467640.2"/>
</dbReference>
<dbReference type="SMR" id="Q5CZP2"/>
<dbReference type="FunCoup" id="Q5CZP2">
    <property type="interactions" value="7"/>
</dbReference>
<dbReference type="STRING" id="7955.ENSDARP00000025988"/>
<dbReference type="PaxDb" id="7955-ENSDARP00000111022"/>
<dbReference type="Ensembl" id="ENSDART00000181589">
    <molecule id="Q5CZP2-1"/>
    <property type="protein sequence ID" value="ENSDARP00000150156"/>
    <property type="gene ID" value="ENSDARG00000013251"/>
</dbReference>
<dbReference type="GeneID" id="503739"/>
<dbReference type="KEGG" id="dre:503739"/>
<dbReference type="AGR" id="ZFIN:ZDB-GENE-050306-18"/>
<dbReference type="CTD" id="3299"/>
<dbReference type="ZFIN" id="ZDB-GENE-050306-18">
    <property type="gene designation" value="hsf4"/>
</dbReference>
<dbReference type="eggNOG" id="KOG0627">
    <property type="taxonomic scope" value="Eukaryota"/>
</dbReference>
<dbReference type="HOGENOM" id="CLU_038829_0_0_1"/>
<dbReference type="InParanoid" id="Q5CZP2"/>
<dbReference type="OMA" id="ACPGKDV"/>
<dbReference type="OrthoDB" id="60033at2759"/>
<dbReference type="PhylomeDB" id="Q5CZP2"/>
<dbReference type="PRO" id="PR:Q5CZP2"/>
<dbReference type="Proteomes" id="UP000000437">
    <property type="component" value="Chromosome 18"/>
</dbReference>
<dbReference type="Bgee" id="ENSDARG00000013251">
    <property type="expression patterns" value="Expressed in lens of camera-type eye and 3 other cell types or tissues"/>
</dbReference>
<dbReference type="ExpressionAtlas" id="Q5CZP2">
    <property type="expression patterns" value="baseline"/>
</dbReference>
<dbReference type="GO" id="GO:0005634">
    <property type="term" value="C:nucleus"/>
    <property type="evidence" value="ECO:0007669"/>
    <property type="project" value="UniProtKB-SubCell"/>
</dbReference>
<dbReference type="GO" id="GO:0003700">
    <property type="term" value="F:DNA-binding transcription factor activity"/>
    <property type="evidence" value="ECO:0007669"/>
    <property type="project" value="InterPro"/>
</dbReference>
<dbReference type="GO" id="GO:0043565">
    <property type="term" value="F:sequence-specific DNA binding"/>
    <property type="evidence" value="ECO:0000314"/>
    <property type="project" value="ZFIN"/>
</dbReference>
<dbReference type="GO" id="GO:0070306">
    <property type="term" value="P:lens fiber cell differentiation"/>
    <property type="evidence" value="ECO:0000315"/>
    <property type="project" value="UniProtKB"/>
</dbReference>
<dbReference type="GO" id="GO:0002089">
    <property type="term" value="P:lens morphogenesis in camera-type eye"/>
    <property type="evidence" value="ECO:0000315"/>
    <property type="project" value="ZFIN"/>
</dbReference>
<dbReference type="GO" id="GO:0036438">
    <property type="term" value="P:maintenance of lens transparency"/>
    <property type="evidence" value="ECO:0000315"/>
    <property type="project" value="ZFIN"/>
</dbReference>
<dbReference type="GO" id="GO:2000772">
    <property type="term" value="P:regulation of cellular senescence"/>
    <property type="evidence" value="ECO:0000315"/>
    <property type="project" value="ZFIN"/>
</dbReference>
<dbReference type="GO" id="GO:1902746">
    <property type="term" value="P:regulation of lens fiber cell differentiation"/>
    <property type="evidence" value="ECO:0000315"/>
    <property type="project" value="ZFIN"/>
</dbReference>
<dbReference type="FunFam" id="1.10.10.10:FF:000027">
    <property type="entry name" value="Heat shock transcription factor 1"/>
    <property type="match status" value="1"/>
</dbReference>
<dbReference type="Gene3D" id="1.10.10.10">
    <property type="entry name" value="Winged helix-like DNA-binding domain superfamily/Winged helix DNA-binding domain"/>
    <property type="match status" value="1"/>
</dbReference>
<dbReference type="InterPro" id="IPR000232">
    <property type="entry name" value="HSF_DNA-bd"/>
</dbReference>
<dbReference type="InterPro" id="IPR010542">
    <property type="entry name" value="Vert_HSTF_C"/>
</dbReference>
<dbReference type="InterPro" id="IPR036388">
    <property type="entry name" value="WH-like_DNA-bd_sf"/>
</dbReference>
<dbReference type="InterPro" id="IPR036390">
    <property type="entry name" value="WH_DNA-bd_sf"/>
</dbReference>
<dbReference type="PANTHER" id="PTHR10015:SF213">
    <property type="entry name" value="HEAT SHOCK FACTOR PROTEIN 4"/>
    <property type="match status" value="1"/>
</dbReference>
<dbReference type="PANTHER" id="PTHR10015">
    <property type="entry name" value="HEAT SHOCK TRANSCRIPTION FACTOR"/>
    <property type="match status" value="1"/>
</dbReference>
<dbReference type="Pfam" id="PF00447">
    <property type="entry name" value="HSF_DNA-bind"/>
    <property type="match status" value="1"/>
</dbReference>
<dbReference type="Pfam" id="PF06546">
    <property type="entry name" value="Vert_HS_TF"/>
    <property type="match status" value="1"/>
</dbReference>
<dbReference type="PRINTS" id="PR00056">
    <property type="entry name" value="HSFDOMAIN"/>
</dbReference>
<dbReference type="SMART" id="SM00415">
    <property type="entry name" value="HSF"/>
    <property type="match status" value="1"/>
</dbReference>
<dbReference type="SUPFAM" id="SSF46785">
    <property type="entry name" value="Winged helix' DNA-binding domain"/>
    <property type="match status" value="1"/>
</dbReference>
<dbReference type="PROSITE" id="PS00434">
    <property type="entry name" value="HSF_DOMAIN"/>
    <property type="match status" value="1"/>
</dbReference>
<evidence type="ECO:0000250" key="1"/>
<evidence type="ECO:0000250" key="2">
    <source>
        <dbReference type="UniProtKB" id="Q9ULV5"/>
    </source>
</evidence>
<evidence type="ECO:0000269" key="3">
    <source>
    </source>
</evidence>
<evidence type="ECO:0000269" key="4">
    <source>
    </source>
</evidence>
<evidence type="ECO:0000269" key="5">
    <source>
    </source>
</evidence>
<evidence type="ECO:0000269" key="6">
    <source>
    </source>
</evidence>
<evidence type="ECO:0000269" key="7">
    <source>
    </source>
</evidence>
<evidence type="ECO:0000269" key="8">
    <source>
    </source>
</evidence>
<evidence type="ECO:0000269" key="9">
    <source>
    </source>
</evidence>
<evidence type="ECO:0000305" key="10"/>
<evidence type="ECO:0000312" key="11">
    <source>
        <dbReference type="EMBL" id="AAH90769.1"/>
    </source>
</evidence>
<evidence type="ECO:0000312" key="12">
    <source>
        <dbReference type="ZFIN" id="ZDB-GENE-050306-18"/>
    </source>
</evidence>